<proteinExistence type="evidence at transcript level"/>
<feature type="initiator methionine" description="Removed" evidence="1">
    <location>
        <position position="1"/>
    </location>
</feature>
<feature type="chain" id="PRO_0000186159" description="Troponin I">
    <location>
        <begin position="2"/>
        <end position="269"/>
    </location>
</feature>
<feature type="region of interest" description="Disordered" evidence="2">
    <location>
        <begin position="1"/>
        <end position="104"/>
    </location>
</feature>
<feature type="region of interest" description="Troponin T-interaction" evidence="1">
    <location>
        <begin position="162"/>
        <end position="171"/>
    </location>
</feature>
<feature type="region of interest" description="Actin-binding" evidence="1">
    <location>
        <begin position="189"/>
        <end position="202"/>
    </location>
</feature>
<feature type="region of interest" description="Disordered" evidence="2">
    <location>
        <begin position="239"/>
        <end position="269"/>
    </location>
</feature>
<feature type="compositionally biased region" description="Low complexity" evidence="2">
    <location>
        <begin position="9"/>
        <end position="50"/>
    </location>
</feature>
<feature type="compositionally biased region" description="Basic and acidic residues" evidence="2">
    <location>
        <begin position="56"/>
        <end position="91"/>
    </location>
</feature>
<feature type="modified residue" description="N-acetylalanine" evidence="1">
    <location>
        <position position="2"/>
    </location>
</feature>
<feature type="modified residue" description="N6,N6,N6-trimethyllysine" evidence="1">
    <location>
        <position position="201"/>
    </location>
</feature>
<feature type="modified residue" description="N6,N6,N6-trimethyllysine" evidence="1">
    <location>
        <position position="205"/>
    </location>
</feature>
<feature type="splice variant" id="VSP_006626" description="In isoform 1, isoform 2, isoform 3, isoform 4, isoform 5, isoform 6, isoform 7 and isoform 8." evidence="5 6">
    <location>
        <begin position="6"/>
        <end position="66"/>
    </location>
</feature>
<feature type="splice variant" id="VSP_006627" description="In isoform 1 and isoform 2." evidence="7">
    <original>GELQEICEEYYERMYICEGQKWDLEYEVRKKDW</original>
    <variation>DTLKSLIKQHYDRINKLEDQKYDLEYVVKRKDV</variation>
    <location>
        <begin position="151"/>
        <end position="183"/>
    </location>
</feature>
<feature type="splice variant" id="VSP_006628" description="In isoform 3 and isoform 4." evidence="7">
    <original>GELQEICEEYYERMYICEGQKWDLEYEVRKKDW</original>
    <variation>DTIQSVCKDYHSKILKLESEKYDFEYDVARKDY</variation>
    <location>
        <begin position="151"/>
        <end position="183"/>
    </location>
</feature>
<feature type="splice variant" id="VSP_006629" description="In isoform 7 and isoform 8." evidence="5">
    <original>GELQEICEEYYERMYICEGQKWDLEYEVRKKDW</original>
    <variation>AELQTICKQYWQRVYSLEGDKFDLEHVQKVKAQ</variation>
    <location>
        <begin position="151"/>
        <end position="183"/>
    </location>
</feature>
<feature type="splice variant" id="VSP_006630" description="In isoform 1, isoform 3, isoform 5, isoform 7 and isoform 9." evidence="7">
    <original>PDWSKGKPGDAKVKEEVEAEA</original>
    <variation>IKDAAVLNKAKK</variation>
    <location>
        <begin position="249"/>
        <end position="269"/>
    </location>
</feature>
<protein>
    <recommendedName>
        <fullName>Troponin I</fullName>
        <shortName>Tn I</shortName>
    </recommendedName>
    <alternativeName>
        <fullName>Protein heldup</fullName>
    </alternativeName>
    <alternativeName>
        <fullName>Protein wings apart-A</fullName>
    </alternativeName>
</protein>
<sequence>MADDEKKAAAPAAAPAAAAKPAAPAAAPAANGKAAPAANGKAAPAAAAAPAGPPKDPNDPKVKAEEAKKAKQAEIERKRAEVRKRMEEASKAKKAKKGFMTPERKKKLRLLLRKKAAEELKKEQERKAAERRRIIEERCGSPRNLSDASEGELQEICEEYYERMYICEGQKWDLEYEVRKKDWEINDLNAQVNDLRGKFVKPALKKVSKYENKFAKLQKKAAEFNFRNQLKVVKKKEFTLEEEEKEKKPDWSKGKPGDAKVKEEVEAEA</sequence>
<name>TNNI_DROME</name>
<dbReference type="EMBL" id="X58188">
    <property type="protein sequence ID" value="CAA41171.1"/>
    <property type="molecule type" value="Genomic_DNA"/>
</dbReference>
<dbReference type="EMBL" id="X59376">
    <property type="protein sequence ID" value="CAA42020.1"/>
    <property type="molecule type" value="mRNA"/>
</dbReference>
<dbReference type="EMBL" id="AE014298">
    <property type="protein sequence ID" value="AAF48802.2"/>
    <property type="molecule type" value="Genomic_DNA"/>
</dbReference>
<dbReference type="EMBL" id="AE014298">
    <property type="protein sequence ID" value="AAF48803.2"/>
    <property type="molecule type" value="Genomic_DNA"/>
</dbReference>
<dbReference type="EMBL" id="AE014298">
    <property type="protein sequence ID" value="AAF48804.2"/>
    <property type="molecule type" value="Genomic_DNA"/>
</dbReference>
<dbReference type="EMBL" id="AE014298">
    <property type="protein sequence ID" value="AAN09458.1"/>
    <property type="molecule type" value="Genomic_DNA"/>
</dbReference>
<dbReference type="EMBL" id="AE014298">
    <property type="protein sequence ID" value="AAN09460.1"/>
    <property type="molecule type" value="Genomic_DNA"/>
</dbReference>
<dbReference type="EMBL" id="AY122145">
    <property type="protein sequence ID" value="AAM52657.1"/>
    <property type="molecule type" value="mRNA"/>
</dbReference>
<dbReference type="PIR" id="A38594">
    <property type="entry name" value="A38594"/>
</dbReference>
<dbReference type="PIR" id="A40547">
    <property type="entry name" value="A40547"/>
</dbReference>
<dbReference type="PIR" id="A48147">
    <property type="entry name" value="A48147"/>
</dbReference>
<dbReference type="PIR" id="B38594">
    <property type="entry name" value="B38594"/>
</dbReference>
<dbReference type="PIR" id="B48147">
    <property type="entry name" value="B48147"/>
</dbReference>
<dbReference type="PIR" id="C48147">
    <property type="entry name" value="C48147"/>
</dbReference>
<dbReference type="PIR" id="D48147">
    <property type="entry name" value="D48147"/>
</dbReference>
<dbReference type="RefSeq" id="NP_001245732.1">
    <molecule id="P36188-10"/>
    <property type="nucleotide sequence ID" value="NM_001258803.2"/>
</dbReference>
<dbReference type="RefSeq" id="NP_001245733.1">
    <molecule id="P36188-8"/>
    <property type="nucleotide sequence ID" value="NM_001258804.2"/>
</dbReference>
<dbReference type="RefSeq" id="NP_001245734.1">
    <molecule id="P36188-2"/>
    <property type="nucleotide sequence ID" value="NM_001258805.2"/>
</dbReference>
<dbReference type="RefSeq" id="NP_523398.1">
    <molecule id="P36188-7"/>
    <property type="nucleotide sequence ID" value="NM_078674.4"/>
</dbReference>
<dbReference type="RefSeq" id="NP_728137.1">
    <molecule id="P36188-7"/>
    <property type="nucleotide sequence ID" value="NM_167603.3"/>
</dbReference>
<dbReference type="RefSeq" id="NP_728138.1">
    <molecule id="P36188-9"/>
    <property type="nucleotide sequence ID" value="NM_167604.4"/>
</dbReference>
<dbReference type="RefSeq" id="NP_728139.1">
    <molecule id="P36188-9"/>
    <property type="nucleotide sequence ID" value="NM_167605.3"/>
</dbReference>
<dbReference type="RefSeq" id="NP_728140.1">
    <molecule id="P36188-5"/>
    <property type="nucleotide sequence ID" value="NM_167606.3"/>
</dbReference>
<dbReference type="RefSeq" id="NP_728141.1">
    <molecule id="P36188-3"/>
    <property type="nucleotide sequence ID" value="NM_167607.3"/>
</dbReference>
<dbReference type="RefSeq" id="NP_728142.1">
    <molecule id="P36188-1"/>
    <property type="nucleotide sequence ID" value="NM_167608.3"/>
</dbReference>
<dbReference type="SMR" id="P36188"/>
<dbReference type="BioGRID" id="59114">
    <property type="interactions" value="58"/>
</dbReference>
<dbReference type="DIP" id="DIP-22750N"/>
<dbReference type="FunCoup" id="P36188">
    <property type="interactions" value="4"/>
</dbReference>
<dbReference type="IntAct" id="P36188">
    <property type="interactions" value="83"/>
</dbReference>
<dbReference type="STRING" id="7227.FBpp0074298"/>
<dbReference type="PaxDb" id="7227-FBpp0074298"/>
<dbReference type="PeptideAtlas" id="P36188"/>
<dbReference type="DNASU" id="32794"/>
<dbReference type="EnsemblMetazoa" id="FBtr0074520">
    <molecule id="P36188-3"/>
    <property type="protein sequence ID" value="FBpp0074294"/>
    <property type="gene ID" value="FBgn0283471"/>
</dbReference>
<dbReference type="EnsemblMetazoa" id="FBtr0074521">
    <molecule id="P36188-5"/>
    <property type="protein sequence ID" value="FBpp0074295"/>
    <property type="gene ID" value="FBgn0283471"/>
</dbReference>
<dbReference type="EnsemblMetazoa" id="FBtr0074522">
    <molecule id="P36188-7"/>
    <property type="protein sequence ID" value="FBpp0074296"/>
    <property type="gene ID" value="FBgn0283471"/>
</dbReference>
<dbReference type="EnsemblMetazoa" id="FBtr0074523">
    <molecule id="P36188-9"/>
    <property type="protein sequence ID" value="FBpp0074297"/>
    <property type="gene ID" value="FBgn0283471"/>
</dbReference>
<dbReference type="EnsemblMetazoa" id="FBtr0074524">
    <molecule id="P36188-1"/>
    <property type="protein sequence ID" value="FBpp0074298"/>
    <property type="gene ID" value="FBgn0283471"/>
</dbReference>
<dbReference type="EnsemblMetazoa" id="FBtr0074525">
    <molecule id="P36188-7"/>
    <property type="protein sequence ID" value="FBpp0074299"/>
    <property type="gene ID" value="FBgn0283471"/>
</dbReference>
<dbReference type="EnsemblMetazoa" id="FBtr0074526">
    <molecule id="P36188-9"/>
    <property type="protein sequence ID" value="FBpp0074300"/>
    <property type="gene ID" value="FBgn0283471"/>
</dbReference>
<dbReference type="EnsemblMetazoa" id="FBtr0308235">
    <molecule id="P36188-10"/>
    <property type="protein sequence ID" value="FBpp0300555"/>
    <property type="gene ID" value="FBgn0283471"/>
</dbReference>
<dbReference type="EnsemblMetazoa" id="FBtr0308236">
    <molecule id="P36188-8"/>
    <property type="protein sequence ID" value="FBpp0300556"/>
    <property type="gene ID" value="FBgn0283471"/>
</dbReference>
<dbReference type="EnsemblMetazoa" id="FBtr0308237">
    <molecule id="P36188-2"/>
    <property type="protein sequence ID" value="FBpp0300557"/>
    <property type="gene ID" value="FBgn0283471"/>
</dbReference>
<dbReference type="GeneID" id="32794"/>
<dbReference type="KEGG" id="dme:Dmel_CG7178"/>
<dbReference type="AGR" id="FB:FBgn0283471"/>
<dbReference type="CTD" id="32794"/>
<dbReference type="FlyBase" id="FBgn0283471">
    <property type="gene designation" value="wupA"/>
</dbReference>
<dbReference type="VEuPathDB" id="VectorBase:FBgn0283471"/>
<dbReference type="eggNOG" id="KOG3977">
    <property type="taxonomic scope" value="Eukaryota"/>
</dbReference>
<dbReference type="GeneTree" id="ENSGT01030000234588"/>
<dbReference type="InParanoid" id="P36188"/>
<dbReference type="OMA" id="MLQVAKH"/>
<dbReference type="OrthoDB" id="371899at2759"/>
<dbReference type="PhylomeDB" id="P36188"/>
<dbReference type="Reactome" id="R-DME-5578775">
    <property type="pathway name" value="Ion homeostasis"/>
</dbReference>
<dbReference type="SignaLink" id="P36188"/>
<dbReference type="BioGRID-ORCS" id="32794">
    <property type="hits" value="0 hits in 3 CRISPR screens"/>
</dbReference>
<dbReference type="ChiTaRS" id="wupA">
    <property type="organism name" value="fly"/>
</dbReference>
<dbReference type="GenomeRNAi" id="32794"/>
<dbReference type="PRO" id="PR:P36188"/>
<dbReference type="Proteomes" id="UP000000803">
    <property type="component" value="Chromosome X"/>
</dbReference>
<dbReference type="Bgee" id="FBgn0283471">
    <property type="expression patterns" value="Expressed in crop (Drosophila) and 120 other cell types or tissues"/>
</dbReference>
<dbReference type="ExpressionAtlas" id="P36188">
    <property type="expression patterns" value="baseline and differential"/>
</dbReference>
<dbReference type="GO" id="GO:0005865">
    <property type="term" value="C:striated muscle thin filament"/>
    <property type="evidence" value="ECO:0007005"/>
    <property type="project" value="FlyBase"/>
</dbReference>
<dbReference type="GO" id="GO:0005861">
    <property type="term" value="C:troponin complex"/>
    <property type="evidence" value="ECO:0000318"/>
    <property type="project" value="GO_Central"/>
</dbReference>
<dbReference type="GO" id="GO:0003779">
    <property type="term" value="F:actin binding"/>
    <property type="evidence" value="ECO:0000303"/>
    <property type="project" value="UniProtKB"/>
</dbReference>
<dbReference type="GO" id="GO:0007527">
    <property type="term" value="P:adult somatic muscle development"/>
    <property type="evidence" value="ECO:0000315"/>
    <property type="project" value="FlyBase"/>
</dbReference>
<dbReference type="GO" id="GO:0048738">
    <property type="term" value="P:cardiac muscle tissue development"/>
    <property type="evidence" value="ECO:0000315"/>
    <property type="project" value="FlyBase"/>
</dbReference>
<dbReference type="GO" id="GO:0060047">
    <property type="term" value="P:heart contraction"/>
    <property type="evidence" value="ECO:0000315"/>
    <property type="project" value="FlyBase"/>
</dbReference>
<dbReference type="GO" id="GO:0007507">
    <property type="term" value="P:heart development"/>
    <property type="evidence" value="ECO:0000315"/>
    <property type="project" value="FlyBase"/>
</dbReference>
<dbReference type="GO" id="GO:0046716">
    <property type="term" value="P:muscle cell cellular homeostasis"/>
    <property type="evidence" value="ECO:0000315"/>
    <property type="project" value="FlyBase"/>
</dbReference>
<dbReference type="GO" id="GO:0006936">
    <property type="term" value="P:muscle contraction"/>
    <property type="evidence" value="ECO:0000318"/>
    <property type="project" value="GO_Central"/>
</dbReference>
<dbReference type="GO" id="GO:0007517">
    <property type="term" value="P:muscle organ development"/>
    <property type="evidence" value="ECO:0000315"/>
    <property type="project" value="UniProtKB"/>
</dbReference>
<dbReference type="GO" id="GO:0030239">
    <property type="term" value="P:myofibril assembly"/>
    <property type="evidence" value="ECO:0000315"/>
    <property type="project" value="FlyBase"/>
</dbReference>
<dbReference type="GO" id="GO:0007399">
    <property type="term" value="P:nervous system development"/>
    <property type="evidence" value="ECO:0000315"/>
    <property type="project" value="UniProtKB"/>
</dbReference>
<dbReference type="GO" id="GO:0000280">
    <property type="term" value="P:nuclear division"/>
    <property type="evidence" value="ECO:0000315"/>
    <property type="project" value="FlyBase"/>
</dbReference>
<dbReference type="GO" id="GO:0045214">
    <property type="term" value="P:sarcomere organization"/>
    <property type="evidence" value="ECO:0000315"/>
    <property type="project" value="FlyBase"/>
</dbReference>
<dbReference type="FunFam" id="1.20.5.350:FF:000004">
    <property type="entry name" value="WupA, isoform I"/>
    <property type="match status" value="1"/>
</dbReference>
<dbReference type="Gene3D" id="1.20.5.350">
    <property type="match status" value="1"/>
</dbReference>
<dbReference type="InterPro" id="IPR001978">
    <property type="entry name" value="Troponin"/>
</dbReference>
<dbReference type="InterPro" id="IPR050875">
    <property type="entry name" value="Troponin_I"/>
</dbReference>
<dbReference type="InterPro" id="IPR038077">
    <property type="entry name" value="Troponin_sf"/>
</dbReference>
<dbReference type="PANTHER" id="PTHR13738">
    <property type="entry name" value="TROPONIN I"/>
    <property type="match status" value="1"/>
</dbReference>
<dbReference type="PANTHER" id="PTHR13738:SF1">
    <property type="entry name" value="TROPONIN I"/>
    <property type="match status" value="1"/>
</dbReference>
<dbReference type="Pfam" id="PF00992">
    <property type="entry name" value="Troponin"/>
    <property type="match status" value="1"/>
</dbReference>
<dbReference type="SUPFAM" id="SSF90250">
    <property type="entry name" value="Troponin coil-coiled subunits"/>
    <property type="match status" value="1"/>
</dbReference>
<keyword id="KW-0007">Acetylation</keyword>
<keyword id="KW-0009">Actin-binding</keyword>
<keyword id="KW-0025">Alternative splicing</keyword>
<keyword id="KW-0488">Methylation</keyword>
<keyword id="KW-0514">Muscle protein</keyword>
<keyword id="KW-1185">Reference proteome</keyword>
<comment type="function">
    <text evidence="3">Troponin I is the ATPase inhibitory subunit of troponin in the thin filament regulatory complex. Involved in the development and maintenance of muscle and nervous system. May also be involved in the cytoskeletal apparatus.</text>
</comment>
<comment type="subunit">
    <text>Binds to actin and tropomyosin.</text>
</comment>
<comment type="alternative products">
    <event type="alternative splicing"/>
    <isoform>
        <id>P36188-1</id>
        <name>10</name>
        <name>G</name>
        <sequence type="displayed"/>
    </isoform>
    <isoform>
        <id>P36188-2</id>
        <name>1</name>
        <sequence type="described" ref="VSP_006626 VSP_006627 VSP_006630"/>
    </isoform>
    <isoform>
        <id>P36188-3</id>
        <name>2</name>
        <name>A</name>
        <sequence type="described" ref="VSP_006626 VSP_006627"/>
    </isoform>
    <isoform>
        <id>P36188-4</id>
        <name>3</name>
        <sequence type="described" ref="VSP_006626 VSP_006628 VSP_006630"/>
    </isoform>
    <isoform>
        <id>P36188-5</id>
        <name>4</name>
        <name>B</name>
        <sequence type="described" ref="VSP_006626 VSP_006628"/>
    </isoform>
    <isoform>
        <id>P36188-6</id>
        <name>5</name>
        <sequence type="described" ref="VSP_006626 VSP_006630"/>
    </isoform>
    <isoform>
        <id>P36188-7</id>
        <name>6</name>
        <name>C</name>
        <name>F</name>
        <sequence type="described" ref="VSP_006626"/>
    </isoform>
    <isoform>
        <id>P36188-8</id>
        <name>7</name>
        <sequence type="described" ref="VSP_006626 VSP_006629 VSP_006630"/>
    </isoform>
    <isoform>
        <id>P36188-9</id>
        <name>8</name>
        <name>D</name>
        <name>E</name>
        <sequence type="described" ref="VSP_006626 VSP_006629"/>
    </isoform>
    <isoform>
        <id>P36188-10</id>
        <name>9</name>
        <sequence type="described" ref="VSP_006630"/>
    </isoform>
    <text>Exon 3 is either present or absent, exon 6 has 4 mutually exclusive forms (6a1, 6a2, 6b1 and 6b2) and C-terminal exons 9 and 10 are mutually exclusive.</text>
</comment>
<comment type="tissue specificity">
    <text evidence="4">All isoforms are expressed in somatic muscle. Isoforms containing exon 6a1 (isoforms 1 and 2) are expressed in all muscles but highest expression is in abdominal muscle and splanchnic muscle of the gut. Isoforms containing exon 6b1 (isoforms 5, 6, 9 and 10) are highly expressed in the tergal depressor of trochanter (TDT) muscle.</text>
</comment>
<comment type="developmental stage">
    <text evidence="4">Isoforms containing exon 3 (isoform 9 and isoform 10) are expressed in adults. Isoforms containing exon 6a1 (isoforms 1 and 2) are expressed at all developmental stages. Isoforms containing exon 6a2 (isoforms 3 and 4) are weakly expressed in embryos and larvae and very weakly in adults. Isoforms containing exon 6b1 (isoforms 5, 6, 9 and 10) are weakly expressed in larva and increase during metamorphosis. Isoforms containing exon 6b2 (isoforms 7 and 8) are weakly expressed in embryos and larvae and at a higher level in adults.</text>
</comment>
<comment type="similarity">
    <text evidence="7">Belongs to the troponin I family.</text>
</comment>
<evidence type="ECO:0000250" key="1"/>
<evidence type="ECO:0000256" key="2">
    <source>
        <dbReference type="SAM" id="MobiDB-lite"/>
    </source>
</evidence>
<evidence type="ECO:0000269" key="3">
    <source>
    </source>
</evidence>
<evidence type="ECO:0000269" key="4">
    <source>
    </source>
</evidence>
<evidence type="ECO:0000303" key="5">
    <source>
    </source>
</evidence>
<evidence type="ECO:0000303" key="6">
    <source>
    </source>
</evidence>
<evidence type="ECO:0000305" key="7"/>
<gene>
    <name type="primary">wupA</name>
    <name type="synonym">HDP</name>
    <name type="synonym">TnI</name>
    <name type="ORF">CG7178</name>
</gene>
<organism>
    <name type="scientific">Drosophila melanogaster</name>
    <name type="common">Fruit fly</name>
    <dbReference type="NCBI Taxonomy" id="7227"/>
    <lineage>
        <taxon>Eukaryota</taxon>
        <taxon>Metazoa</taxon>
        <taxon>Ecdysozoa</taxon>
        <taxon>Arthropoda</taxon>
        <taxon>Hexapoda</taxon>
        <taxon>Insecta</taxon>
        <taxon>Pterygota</taxon>
        <taxon>Neoptera</taxon>
        <taxon>Endopterygota</taxon>
        <taxon>Diptera</taxon>
        <taxon>Brachycera</taxon>
        <taxon>Muscomorpha</taxon>
        <taxon>Ephydroidea</taxon>
        <taxon>Drosophilidae</taxon>
        <taxon>Drosophila</taxon>
        <taxon>Sophophora</taxon>
    </lineage>
</organism>
<accession>P36188</accession>
<accession>Q0KHR0</accession>
<accession>Q9VWY1</accession>
<accession>Q9VWY2</accession>
<accession>Q9VWY3</accession>
<accession>Q9VWY4</accession>
<reference key="1">
    <citation type="journal article" date="1991" name="Genes Dev.">
        <title>Troponin I is encoded in the haplolethal region of the Shaker gene complex of Drosophila.</title>
        <authorList>
            <person name="Barbas J.A."/>
            <person name="Galceran J."/>
            <person name="Krah-Jentgens I."/>
            <person name="de la Pompa J.L."/>
            <person name="Canal I."/>
            <person name="Pongs O."/>
            <person name="Ferrus A."/>
        </authorList>
    </citation>
    <scope>NUCLEOTIDE SEQUENCE [GENOMIC DNA]</scope>
    <scope>ALTERNATIVE SPLICING (ISOFORMS 2 AND 9)</scope>
    <scope>FUNCTION</scope>
    <source>
        <strain>Canton-S</strain>
        <tissue>Embryo</tissue>
        <tissue>Larva</tissue>
    </source>
</reference>
<reference key="2">
    <citation type="journal article" date="1991" name="J. Cell Biol.">
        <title>Muscle abnormalities in Drosophila melanogaster heldup mutants are caused by missing or aberrant troponin-I isoforms.</title>
        <authorList>
            <person name="Beall C.J."/>
            <person name="Fyrberg E."/>
        </authorList>
    </citation>
    <scope>NUCLEOTIDE SEQUENCE [MRNA] (ISOFORM 6)</scope>
    <source>
        <strain>Oregon-R</strain>
        <tissue>Pupae</tissue>
    </source>
</reference>
<reference key="3">
    <citation type="journal article" date="2000" name="Science">
        <title>The genome sequence of Drosophila melanogaster.</title>
        <authorList>
            <person name="Adams M.D."/>
            <person name="Celniker S.E."/>
            <person name="Holt R.A."/>
            <person name="Evans C.A."/>
            <person name="Gocayne J.D."/>
            <person name="Amanatides P.G."/>
            <person name="Scherer S.E."/>
            <person name="Li P.W."/>
            <person name="Hoskins R.A."/>
            <person name="Galle R.F."/>
            <person name="George R.A."/>
            <person name="Lewis S.E."/>
            <person name="Richards S."/>
            <person name="Ashburner M."/>
            <person name="Henderson S.N."/>
            <person name="Sutton G.G."/>
            <person name="Wortman J.R."/>
            <person name="Yandell M.D."/>
            <person name="Zhang Q."/>
            <person name="Chen L.X."/>
            <person name="Brandon R.C."/>
            <person name="Rogers Y.-H.C."/>
            <person name="Blazej R.G."/>
            <person name="Champe M."/>
            <person name="Pfeiffer B.D."/>
            <person name="Wan K.H."/>
            <person name="Doyle C."/>
            <person name="Baxter E.G."/>
            <person name="Helt G."/>
            <person name="Nelson C.R."/>
            <person name="Miklos G.L.G."/>
            <person name="Abril J.F."/>
            <person name="Agbayani A."/>
            <person name="An H.-J."/>
            <person name="Andrews-Pfannkoch C."/>
            <person name="Baldwin D."/>
            <person name="Ballew R.M."/>
            <person name="Basu A."/>
            <person name="Baxendale J."/>
            <person name="Bayraktaroglu L."/>
            <person name="Beasley E.M."/>
            <person name="Beeson K.Y."/>
            <person name="Benos P.V."/>
            <person name="Berman B.P."/>
            <person name="Bhandari D."/>
            <person name="Bolshakov S."/>
            <person name="Borkova D."/>
            <person name="Botchan M.R."/>
            <person name="Bouck J."/>
            <person name="Brokstein P."/>
            <person name="Brottier P."/>
            <person name="Burtis K.C."/>
            <person name="Busam D.A."/>
            <person name="Butler H."/>
            <person name="Cadieu E."/>
            <person name="Center A."/>
            <person name="Chandra I."/>
            <person name="Cherry J.M."/>
            <person name="Cawley S."/>
            <person name="Dahlke C."/>
            <person name="Davenport L.B."/>
            <person name="Davies P."/>
            <person name="de Pablos B."/>
            <person name="Delcher A."/>
            <person name="Deng Z."/>
            <person name="Mays A.D."/>
            <person name="Dew I."/>
            <person name="Dietz S.M."/>
            <person name="Dodson K."/>
            <person name="Doup L.E."/>
            <person name="Downes M."/>
            <person name="Dugan-Rocha S."/>
            <person name="Dunkov B.C."/>
            <person name="Dunn P."/>
            <person name="Durbin K.J."/>
            <person name="Evangelista C.C."/>
            <person name="Ferraz C."/>
            <person name="Ferriera S."/>
            <person name="Fleischmann W."/>
            <person name="Fosler C."/>
            <person name="Gabrielian A.E."/>
            <person name="Garg N.S."/>
            <person name="Gelbart W.M."/>
            <person name="Glasser K."/>
            <person name="Glodek A."/>
            <person name="Gong F."/>
            <person name="Gorrell J.H."/>
            <person name="Gu Z."/>
            <person name="Guan P."/>
            <person name="Harris M."/>
            <person name="Harris N.L."/>
            <person name="Harvey D.A."/>
            <person name="Heiman T.J."/>
            <person name="Hernandez J.R."/>
            <person name="Houck J."/>
            <person name="Hostin D."/>
            <person name="Houston K.A."/>
            <person name="Howland T.J."/>
            <person name="Wei M.-H."/>
            <person name="Ibegwam C."/>
            <person name="Jalali M."/>
            <person name="Kalush F."/>
            <person name="Karpen G.H."/>
            <person name="Ke Z."/>
            <person name="Kennison J.A."/>
            <person name="Ketchum K.A."/>
            <person name="Kimmel B.E."/>
            <person name="Kodira C.D."/>
            <person name="Kraft C.L."/>
            <person name="Kravitz S."/>
            <person name="Kulp D."/>
            <person name="Lai Z."/>
            <person name="Lasko P."/>
            <person name="Lei Y."/>
            <person name="Levitsky A.A."/>
            <person name="Li J.H."/>
            <person name="Li Z."/>
            <person name="Liang Y."/>
            <person name="Lin X."/>
            <person name="Liu X."/>
            <person name="Mattei B."/>
            <person name="McIntosh T.C."/>
            <person name="McLeod M.P."/>
            <person name="McPherson D."/>
            <person name="Merkulov G."/>
            <person name="Milshina N.V."/>
            <person name="Mobarry C."/>
            <person name="Morris J."/>
            <person name="Moshrefi A."/>
            <person name="Mount S.M."/>
            <person name="Moy M."/>
            <person name="Murphy B."/>
            <person name="Murphy L."/>
            <person name="Muzny D.M."/>
            <person name="Nelson D.L."/>
            <person name="Nelson D.R."/>
            <person name="Nelson K.A."/>
            <person name="Nixon K."/>
            <person name="Nusskern D.R."/>
            <person name="Pacleb J.M."/>
            <person name="Palazzolo M."/>
            <person name="Pittman G.S."/>
            <person name="Pan S."/>
            <person name="Pollard J."/>
            <person name="Puri V."/>
            <person name="Reese M.G."/>
            <person name="Reinert K."/>
            <person name="Remington K."/>
            <person name="Saunders R.D.C."/>
            <person name="Scheeler F."/>
            <person name="Shen H."/>
            <person name="Shue B.C."/>
            <person name="Siden-Kiamos I."/>
            <person name="Simpson M."/>
            <person name="Skupski M.P."/>
            <person name="Smith T.J."/>
            <person name="Spier E."/>
            <person name="Spradling A.C."/>
            <person name="Stapleton M."/>
            <person name="Strong R."/>
            <person name="Sun E."/>
            <person name="Svirskas R."/>
            <person name="Tector C."/>
            <person name="Turner R."/>
            <person name="Venter E."/>
            <person name="Wang A.H."/>
            <person name="Wang X."/>
            <person name="Wang Z.-Y."/>
            <person name="Wassarman D.A."/>
            <person name="Weinstock G.M."/>
            <person name="Weissenbach J."/>
            <person name="Williams S.M."/>
            <person name="Woodage T."/>
            <person name="Worley K.C."/>
            <person name="Wu D."/>
            <person name="Yang S."/>
            <person name="Yao Q.A."/>
            <person name="Ye J."/>
            <person name="Yeh R.-F."/>
            <person name="Zaveri J.S."/>
            <person name="Zhan M."/>
            <person name="Zhang G."/>
            <person name="Zhao Q."/>
            <person name="Zheng L."/>
            <person name="Zheng X.H."/>
            <person name="Zhong F.N."/>
            <person name="Zhong W."/>
            <person name="Zhou X."/>
            <person name="Zhu S.C."/>
            <person name="Zhu X."/>
            <person name="Smith H.O."/>
            <person name="Gibbs R.A."/>
            <person name="Myers E.W."/>
            <person name="Rubin G.M."/>
            <person name="Venter J.C."/>
        </authorList>
    </citation>
    <scope>NUCLEOTIDE SEQUENCE [LARGE SCALE GENOMIC DNA]</scope>
    <source>
        <strain>Berkeley</strain>
    </source>
</reference>
<reference key="4">
    <citation type="journal article" date="2002" name="Genome Biol.">
        <title>Annotation of the Drosophila melanogaster euchromatic genome: a systematic review.</title>
        <authorList>
            <person name="Misra S."/>
            <person name="Crosby M.A."/>
            <person name="Mungall C.J."/>
            <person name="Matthews B.B."/>
            <person name="Campbell K.S."/>
            <person name="Hradecky P."/>
            <person name="Huang Y."/>
            <person name="Kaminker J.S."/>
            <person name="Millburn G.H."/>
            <person name="Prochnik S.E."/>
            <person name="Smith C.D."/>
            <person name="Tupy J.L."/>
            <person name="Whitfield E.J."/>
            <person name="Bayraktaroglu L."/>
            <person name="Berman B.P."/>
            <person name="Bettencourt B.R."/>
            <person name="Celniker S.E."/>
            <person name="de Grey A.D.N.J."/>
            <person name="Drysdale R.A."/>
            <person name="Harris N.L."/>
            <person name="Richter J."/>
            <person name="Russo S."/>
            <person name="Schroeder A.J."/>
            <person name="Shu S.Q."/>
            <person name="Stapleton M."/>
            <person name="Yamada C."/>
            <person name="Ashburner M."/>
            <person name="Gelbart W.M."/>
            <person name="Rubin G.M."/>
            <person name="Lewis S.E."/>
        </authorList>
    </citation>
    <scope>GENOME REANNOTATION</scope>
    <scope>ALTERNATIVE SPLICING</scope>
    <source>
        <strain>Berkeley</strain>
    </source>
</reference>
<reference key="5">
    <citation type="journal article" date="2002" name="Genome Biol.">
        <title>A Drosophila full-length cDNA resource.</title>
        <authorList>
            <person name="Stapleton M."/>
            <person name="Carlson J.W."/>
            <person name="Brokstein P."/>
            <person name="Yu C."/>
            <person name="Champe M."/>
            <person name="George R.A."/>
            <person name="Guarin H."/>
            <person name="Kronmiller B."/>
            <person name="Pacleb J.M."/>
            <person name="Park S."/>
            <person name="Wan K.H."/>
            <person name="Rubin G.M."/>
            <person name="Celniker S.E."/>
        </authorList>
    </citation>
    <scope>NUCLEOTIDE SEQUENCE [LARGE SCALE MRNA] (ISOFORM 8)</scope>
    <source>
        <strain>Berkeley</strain>
        <tissue>Head</tissue>
    </source>
</reference>
<reference key="6">
    <citation type="journal article" date="1993" name="Mol. Cell. Biol.">
        <title>Abnormal muscle development in the heldup3 mutant of Drosophila melanogaster is caused by a splicing defect affecting selected troponin I isoforms.</title>
        <authorList>
            <person name="Barbas J.A."/>
            <person name="Galceran J."/>
            <person name="Torroja L."/>
            <person name="Prado A."/>
            <person name="Ferrus A."/>
        </authorList>
    </citation>
    <scope>ALTERNATIVE SPLICING</scope>
    <scope>TISSUE SPECIFICITY</scope>
    <scope>DEVELOPMENTAL STAGE</scope>
</reference>